<organism>
    <name type="scientific">Solanum tuberosum</name>
    <name type="common">Potato</name>
    <dbReference type="NCBI Taxonomy" id="4113"/>
    <lineage>
        <taxon>Eukaryota</taxon>
        <taxon>Viridiplantae</taxon>
        <taxon>Streptophyta</taxon>
        <taxon>Embryophyta</taxon>
        <taxon>Tracheophyta</taxon>
        <taxon>Spermatophyta</taxon>
        <taxon>Magnoliopsida</taxon>
        <taxon>eudicotyledons</taxon>
        <taxon>Gunneridae</taxon>
        <taxon>Pentapetalae</taxon>
        <taxon>asterids</taxon>
        <taxon>lamiids</taxon>
        <taxon>Solanales</taxon>
        <taxon>Solanaceae</taxon>
        <taxon>Solanoideae</taxon>
        <taxon>Solaneae</taxon>
        <taxon>Solanum</taxon>
    </lineage>
</organism>
<name>RBS4_SOLTU</name>
<dbReference type="EMBL" id="X69761">
    <property type="protein sequence ID" value="CAA49415.1"/>
    <property type="molecule type" value="Genomic_DNA"/>
</dbReference>
<dbReference type="PIR" id="D31083">
    <property type="entry name" value="RKPO2B"/>
</dbReference>
<dbReference type="SMR" id="P26576"/>
<dbReference type="FunCoup" id="P26576">
    <property type="interactions" value="1469"/>
</dbReference>
<dbReference type="STRING" id="4113.P26576"/>
<dbReference type="InParanoid" id="P26576"/>
<dbReference type="Proteomes" id="UP000011115">
    <property type="component" value="Unassembled WGS sequence"/>
</dbReference>
<dbReference type="ExpressionAtlas" id="P26576">
    <property type="expression patterns" value="baseline and differential"/>
</dbReference>
<dbReference type="GO" id="GO:0009507">
    <property type="term" value="C:chloroplast"/>
    <property type="evidence" value="ECO:0007669"/>
    <property type="project" value="UniProtKB-SubCell"/>
</dbReference>
<dbReference type="GO" id="GO:0016984">
    <property type="term" value="F:ribulose-bisphosphate carboxylase activity"/>
    <property type="evidence" value="ECO:0007669"/>
    <property type="project" value="UniProtKB-UniRule"/>
</dbReference>
<dbReference type="GO" id="GO:0009853">
    <property type="term" value="P:photorespiration"/>
    <property type="evidence" value="ECO:0007669"/>
    <property type="project" value="UniProtKB-KW"/>
</dbReference>
<dbReference type="GO" id="GO:0019253">
    <property type="term" value="P:reductive pentose-phosphate cycle"/>
    <property type="evidence" value="ECO:0007669"/>
    <property type="project" value="UniProtKB-UniRule"/>
</dbReference>
<dbReference type="CDD" id="cd03527">
    <property type="entry name" value="RuBisCO_small"/>
    <property type="match status" value="1"/>
</dbReference>
<dbReference type="FunFam" id="3.30.190.10:FF:000001">
    <property type="entry name" value="Ribulose bisphosphate carboxylase small chain, chloroplastic"/>
    <property type="match status" value="1"/>
</dbReference>
<dbReference type="Gene3D" id="3.30.190.10">
    <property type="entry name" value="Ribulose bisphosphate carboxylase, small subunit"/>
    <property type="match status" value="1"/>
</dbReference>
<dbReference type="HAMAP" id="MF_00859">
    <property type="entry name" value="RuBisCO_S_bact"/>
    <property type="match status" value="1"/>
</dbReference>
<dbReference type="InterPro" id="IPR024681">
    <property type="entry name" value="RuBisCO_ssu"/>
</dbReference>
<dbReference type="InterPro" id="IPR000894">
    <property type="entry name" value="RuBisCO_ssu_dom"/>
</dbReference>
<dbReference type="InterPro" id="IPR024680">
    <property type="entry name" value="RuBisCO_ssu_N"/>
</dbReference>
<dbReference type="InterPro" id="IPR036385">
    <property type="entry name" value="RuBisCO_ssu_sf"/>
</dbReference>
<dbReference type="PANTHER" id="PTHR31262">
    <property type="entry name" value="RIBULOSE BISPHOSPHATE CARBOXYLASE SMALL CHAIN 1, CHLOROPLASTIC"/>
    <property type="match status" value="1"/>
</dbReference>
<dbReference type="PANTHER" id="PTHR31262:SF10">
    <property type="entry name" value="RIBULOSE BISPHOSPHATE CARBOXYLASE SMALL SUBUNIT 1A, CHLOROPLASTIC-RELATED"/>
    <property type="match status" value="1"/>
</dbReference>
<dbReference type="Pfam" id="PF12338">
    <property type="entry name" value="RbcS"/>
    <property type="match status" value="1"/>
</dbReference>
<dbReference type="Pfam" id="PF00101">
    <property type="entry name" value="RuBisCO_small"/>
    <property type="match status" value="1"/>
</dbReference>
<dbReference type="PRINTS" id="PR00152">
    <property type="entry name" value="RUBISCOSMALL"/>
</dbReference>
<dbReference type="SMART" id="SM00961">
    <property type="entry name" value="RuBisCO_small"/>
    <property type="match status" value="1"/>
</dbReference>
<dbReference type="SUPFAM" id="SSF55239">
    <property type="entry name" value="RuBisCO, small subunit"/>
    <property type="match status" value="1"/>
</dbReference>
<keyword id="KW-0113">Calvin cycle</keyword>
<keyword id="KW-0120">Carbon dioxide fixation</keyword>
<keyword id="KW-0150">Chloroplast</keyword>
<keyword id="KW-0601">Photorespiration</keyword>
<keyword id="KW-0602">Photosynthesis</keyword>
<keyword id="KW-0934">Plastid</keyword>
<keyword id="KW-1185">Reference proteome</keyword>
<keyword id="KW-0809">Transit peptide</keyword>
<accession>P26576</accession>
<gene>
    <name evidence="1" type="primary">RBCS4</name>
    <name type="synonym">RBCS-2B</name>
</gene>
<proteinExistence type="inferred from homology"/>
<reference key="1">
    <citation type="journal article" date="1988" name="Proc. Natl. Acad. Sci. U.S.A.">
        <title>rbcS genes in Solanum tuberosum: conservation of transit peptide and exon shuffling during evolution.</title>
        <authorList>
            <person name="Wolter F.P."/>
            <person name="Fritz C.C."/>
            <person name="Willmitzer L."/>
            <person name="Schell J."/>
            <person name="Schreier P.H."/>
        </authorList>
    </citation>
    <scope>NUCLEOTIDE SEQUENCE [GENOMIC DNA]</scope>
</reference>
<reference key="2">
    <citation type="submission" date="1992-12" db="EMBL/GenBank/DDBJ databases">
        <authorList>
            <person name="Fritz C.C."/>
            <person name="Wolter F.P."/>
            <person name="Schenkemeyer V."/>
            <person name="Herget T."/>
            <person name="Schreier P.H."/>
        </authorList>
    </citation>
    <scope>NUCLEOTIDE SEQUENCE [GENOMIC DNA]</scope>
    <source>
        <strain>cv. AM 80.5793</strain>
    </source>
</reference>
<feature type="transit peptide" description="Chloroplast" evidence="1">
    <location>
        <begin position="1"/>
        <end position="56"/>
    </location>
</feature>
<feature type="chain" id="PRO_0000031553" description="Ribulose bisphosphate carboxylase small subunit, chloroplastic 4" evidence="1">
    <location>
        <begin position="57"/>
        <end position="180"/>
    </location>
</feature>
<comment type="function">
    <text evidence="1">RuBisCO catalyzes two reactions: the carboxylation of D-ribulose 1,5-bisphosphate, the primary event in carbon dioxide fixation, as well as the oxidative fragmentation of the pentose substrate. Both reactions occur simultaneously and in competition at the same active site. Although the small subunit is not catalytic it is essential for maximal activity.</text>
</comment>
<comment type="subunit">
    <text evidence="1">Heterohexadecamer of 8 large and 8 small subunits.</text>
</comment>
<comment type="subcellular location">
    <subcellularLocation>
        <location evidence="1">Plastid</location>
        <location evidence="1">Chloroplast</location>
    </subcellularLocation>
</comment>
<comment type="miscellaneous">
    <text evidence="1">The basic functional RuBisCO is composed of a large chain homodimer in a 'head-to-tail' conformation. In form I RuBisCO this homodimer is arranged in a barrel-like tetramer with the small subunits forming a tetrameric 'cap' on each end of the 'barrel'.</text>
</comment>
<comment type="similarity">
    <text evidence="1">Belongs to the RuBisCO small chain family.</text>
</comment>
<sequence>MASSIVSSAAVATRANGAQASMVGPFTGLKSTASFPVSRKQNLDITSIASNGGRVRCMQVWPPINMKKYETLSYLPDLSDEQLLKEVEYLLKNGWVPCLEFETEHGFVYRENNKSPGYYDGRYWTMWKLPMFGCTDATQVLAEVEEAKKAYPQAWIRIIGFDNVRQVQCISFIAYKPEGY</sequence>
<evidence type="ECO:0000255" key="1">
    <source>
        <dbReference type="HAMAP-Rule" id="MF_00860"/>
    </source>
</evidence>
<protein>
    <recommendedName>
        <fullName evidence="1">Ribulose bisphosphate carboxylase small subunit, chloroplastic 4</fullName>
        <shortName evidence="1">RuBisCO small subunit 4</shortName>
    </recommendedName>
    <alternativeName>
        <fullName>Ribulose bisphosphate carboxylase small chain 2B, chloroplastic</fullName>
        <shortName>RuBisCO small subunit 2B</shortName>
    </alternativeName>
</protein>